<reference key="1">
    <citation type="submission" date="1998-10" db="EMBL/GenBank/DDBJ databases">
        <title>Isolation and characterization of MEI2, the Arabidopsis homolog of the Schizosaccharomyces pombe mei2 gene.</title>
        <authorList>
            <person name="Bourdon V."/>
            <person name="Tinland B."/>
        </authorList>
    </citation>
    <scope>NUCLEOTIDE SEQUENCE [MRNA]</scope>
    <source>
        <strain>cv. Columbia</strain>
    </source>
</reference>
<reference key="2">
    <citation type="journal article" date="1999" name="Nature">
        <title>Sequence and analysis of chromosome 2 of the plant Arabidopsis thaliana.</title>
        <authorList>
            <person name="Lin X."/>
            <person name="Kaul S."/>
            <person name="Rounsley S.D."/>
            <person name="Shea T.P."/>
            <person name="Benito M.-I."/>
            <person name="Town C.D."/>
            <person name="Fujii C.Y."/>
            <person name="Mason T.M."/>
            <person name="Bowman C.L."/>
            <person name="Barnstead M.E."/>
            <person name="Feldblyum T.V."/>
            <person name="Buell C.R."/>
            <person name="Ketchum K.A."/>
            <person name="Lee J.J."/>
            <person name="Ronning C.M."/>
            <person name="Koo H.L."/>
            <person name="Moffat K.S."/>
            <person name="Cronin L.A."/>
            <person name="Shen M."/>
            <person name="Pai G."/>
            <person name="Van Aken S."/>
            <person name="Umayam L."/>
            <person name="Tallon L.J."/>
            <person name="Gill J.E."/>
            <person name="Adams M.D."/>
            <person name="Carrera A.J."/>
            <person name="Creasy T.H."/>
            <person name="Goodman H.M."/>
            <person name="Somerville C.R."/>
            <person name="Copenhaver G.P."/>
            <person name="Preuss D."/>
            <person name="Nierman W.C."/>
            <person name="White O."/>
            <person name="Eisen J.A."/>
            <person name="Salzberg S.L."/>
            <person name="Fraser C.M."/>
            <person name="Venter J.C."/>
        </authorList>
    </citation>
    <scope>NUCLEOTIDE SEQUENCE [LARGE SCALE GENOMIC DNA]</scope>
    <source>
        <strain>cv. Columbia</strain>
    </source>
</reference>
<reference key="3">
    <citation type="journal article" date="2017" name="Plant J.">
        <title>Araport11: a complete reannotation of the Arabidopsis thaliana reference genome.</title>
        <authorList>
            <person name="Cheng C.Y."/>
            <person name="Krishnakumar V."/>
            <person name="Chan A.P."/>
            <person name="Thibaud-Nissen F."/>
            <person name="Schobel S."/>
            <person name="Town C.D."/>
        </authorList>
    </citation>
    <scope>GENOME REANNOTATION</scope>
    <source>
        <strain>cv. Columbia</strain>
    </source>
</reference>
<reference key="4">
    <citation type="journal article" date="2003" name="Science">
        <title>Empirical analysis of transcriptional activity in the Arabidopsis genome.</title>
        <authorList>
            <person name="Yamada K."/>
            <person name="Lim J."/>
            <person name="Dale J.M."/>
            <person name="Chen H."/>
            <person name="Shinn P."/>
            <person name="Palm C.J."/>
            <person name="Southwick A.M."/>
            <person name="Wu H.C."/>
            <person name="Kim C.J."/>
            <person name="Nguyen M."/>
            <person name="Pham P.K."/>
            <person name="Cheuk R.F."/>
            <person name="Karlin-Newmann G."/>
            <person name="Liu S.X."/>
            <person name="Lam B."/>
            <person name="Sakano H."/>
            <person name="Wu T."/>
            <person name="Yu G."/>
            <person name="Miranda M."/>
            <person name="Quach H.L."/>
            <person name="Tripp M."/>
            <person name="Chang C.H."/>
            <person name="Lee J.M."/>
            <person name="Toriumi M.J."/>
            <person name="Chan M.M."/>
            <person name="Tang C.C."/>
            <person name="Onodera C.S."/>
            <person name="Deng J.M."/>
            <person name="Akiyama K."/>
            <person name="Ansari Y."/>
            <person name="Arakawa T."/>
            <person name="Banh J."/>
            <person name="Banno F."/>
            <person name="Bowser L."/>
            <person name="Brooks S.Y."/>
            <person name="Carninci P."/>
            <person name="Chao Q."/>
            <person name="Choy N."/>
            <person name="Enju A."/>
            <person name="Goldsmith A.D."/>
            <person name="Gurjal M."/>
            <person name="Hansen N.F."/>
            <person name="Hayashizaki Y."/>
            <person name="Johnson-Hopson C."/>
            <person name="Hsuan V.W."/>
            <person name="Iida K."/>
            <person name="Karnes M."/>
            <person name="Khan S."/>
            <person name="Koesema E."/>
            <person name="Ishida J."/>
            <person name="Jiang P.X."/>
            <person name="Jones T."/>
            <person name="Kawai J."/>
            <person name="Kamiya A."/>
            <person name="Meyers C."/>
            <person name="Nakajima M."/>
            <person name="Narusaka M."/>
            <person name="Seki M."/>
            <person name="Sakurai T."/>
            <person name="Satou M."/>
            <person name="Tamse R."/>
            <person name="Vaysberg M."/>
            <person name="Wallender E.K."/>
            <person name="Wong C."/>
            <person name="Yamamura Y."/>
            <person name="Yuan S."/>
            <person name="Shinozaki K."/>
            <person name="Davis R.W."/>
            <person name="Theologis A."/>
            <person name="Ecker J.R."/>
        </authorList>
    </citation>
    <scope>NUCLEOTIDE SEQUENCE [LARGE SCALE MRNA]</scope>
    <source>
        <strain>cv. Columbia</strain>
    </source>
</reference>
<reference key="5">
    <citation type="journal article" date="2004" name="Plant Mol. Biol.">
        <title>Diversification of genes encoding mei2 -like RNA binding proteins in plants.</title>
        <authorList>
            <person name="Anderson G.H."/>
            <person name="Alvarez N.D."/>
            <person name="Gilman C."/>
            <person name="Jeffares D.C."/>
            <person name="Trainor V.C."/>
            <person name="Hanson M.R."/>
            <person name="Veit B."/>
        </authorList>
    </citation>
    <scope>GENE FAMILY</scope>
    <scope>DEVELOPMENTAL STAGE</scope>
</reference>
<reference key="6">
    <citation type="journal article" date="2005" name="BMC Plant Biol.">
        <title>The Arabidopsis Mei2 homologue AML1 binds AtRaptor1B, the plant homologue of a major regulator of eukaryotic cell growth.</title>
        <authorList>
            <person name="Anderson G.H."/>
            <person name="Hanson M.R."/>
        </authorList>
    </citation>
    <scope>FUNCTION</scope>
    <scope>DISRUPTION PHENOTYPE</scope>
</reference>
<reference key="7">
    <citation type="journal article" date="2006" name="Plant Cell">
        <title>The Arabidopsis-mei2-like genes play a role in meiosis and vegetative growth in Arabidopsis.</title>
        <authorList>
            <person name="Kaur J."/>
            <person name="Sebastian J."/>
            <person name="Siddiqi I."/>
        </authorList>
    </citation>
    <scope>FUNCTION</scope>
    <scope>TISSUE SPECIFICITY</scope>
</reference>
<sequence length="843" mass="93215">MVSSIIAVAEGKKMELEPNKSLSADMPSLLSRSSEAFNGGTGYRSSSDLSMFSSSLPTLFHEKLNMTDSDSWLSFDESSPNLNKLVIGNSEKDSLEDVEPDALEILLPEDENELLPGLIDELNFTGLPDELDDLEECDVFCTGGGMELDVESQDNHAVDASGMQISDRGAANAFVPRKRPNTAGRVSVEHPNGEHPSRTLFVRNINSSVEDSELSALFEPFGEIRSLYTACKSRGFVMISYYDIRAAHAAMRALQNTLLRKRTLDIHFSIPKENPSEKDMNQGTLVIFNVDTTVSNDELLQLFGAYGEIREIRETPNRRFHRFIEYYDVRDAETALKALNRSEIGGKCIKLELSRPGGARRLSVPSQSQDLERTEVTNFYNQVGSHVANSPPGNWPIGSPVKGSPSHAFTRPHGLGMVRPVNSDNMPGLASILPAHPSSFHGFSPVSNDQGLLNHSNQTILNKGLMHNISYGQPHSLPEHITGGISNSMRFIAPHSSGFGTSSDHRYRWGSPPQHMNYPGYTGVSSSSSSTERPFTVRHGFPFAERQASLLGKYQHHVGSAPSSIHFNTQMNCYTGSPEIPLGFSDMGINRNYNSAHGKANLGVSLPGNSSEQDFTGFGMSSMPTVPFGGSRGLQSVRPEPFAEQGRIHNHESHNQNQFIDGGRYHIDLDRIASGDEIRTTLIIKNIPNKYTYKMLVAEIDEKHKGDYDFLCLPTDFKNKCNMGHAFINMVSPLHIVPFQQTFNGKIWEKFNSGKVASLAYAEIQGKSALASYMQTPSSMKEQKQLFPEVSYHDDGQDANDHEQLFSSIWNITAPDSDWSYTMDLIENPRENGNSKNAAEESS</sequence>
<keyword id="KW-0025">Alternative splicing</keyword>
<keyword id="KW-0469">Meiosis</keyword>
<keyword id="KW-1185">Reference proteome</keyword>
<keyword id="KW-0677">Repeat</keyword>
<keyword id="KW-0694">RNA-binding</keyword>
<feature type="chain" id="PRO_0000409342" description="Protein MEI2-like 2">
    <location>
        <begin position="1"/>
        <end position="843"/>
    </location>
</feature>
<feature type="domain" description="RRM 1" evidence="1">
    <location>
        <begin position="198"/>
        <end position="271"/>
    </location>
</feature>
<feature type="domain" description="RRM 2" evidence="1">
    <location>
        <begin position="283"/>
        <end position="356"/>
    </location>
</feature>
<organism>
    <name type="scientific">Arabidopsis thaliana</name>
    <name type="common">Mouse-ear cress</name>
    <dbReference type="NCBI Taxonomy" id="3702"/>
    <lineage>
        <taxon>Eukaryota</taxon>
        <taxon>Viridiplantae</taxon>
        <taxon>Streptophyta</taxon>
        <taxon>Embryophyta</taxon>
        <taxon>Tracheophyta</taxon>
        <taxon>Spermatophyta</taxon>
        <taxon>Magnoliopsida</taxon>
        <taxon>eudicotyledons</taxon>
        <taxon>Gunneridae</taxon>
        <taxon>Pentapetalae</taxon>
        <taxon>rosids</taxon>
        <taxon>malvids</taxon>
        <taxon>Brassicales</taxon>
        <taxon>Brassicaceae</taxon>
        <taxon>Camelineae</taxon>
        <taxon>Arabidopsis</taxon>
    </lineage>
</organism>
<protein>
    <recommendedName>
        <fullName>Protein MEI2-like 2</fullName>
        <shortName>AML2</shortName>
    </recommendedName>
    <alternativeName>
        <fullName>MEI2-like protein 2</fullName>
    </alternativeName>
</protein>
<evidence type="ECO:0000255" key="1">
    <source>
        <dbReference type="PROSITE-ProRule" id="PRU00176"/>
    </source>
</evidence>
<evidence type="ECO:0000269" key="2">
    <source>
    </source>
</evidence>
<evidence type="ECO:0000269" key="3">
    <source>
    </source>
</evidence>
<evidence type="ECO:0000269" key="4">
    <source>
    </source>
</evidence>
<evidence type="ECO:0000305" key="5"/>
<name>AML2_ARATH</name>
<proteinExistence type="evidence at transcript level"/>
<accession>Q9SJG8</accession>
<accession>Q8S8G0</accession>
<accession>Q9ASS1</accession>
<accession>Q9SEU3</accession>
<gene>
    <name type="primary">ML2</name>
    <name type="synonym">MEI2</name>
    <name type="ordered locus">At2g42890</name>
    <name type="ORF">F7D19.11</name>
</gene>
<dbReference type="EMBL" id="AF101056">
    <property type="protein sequence ID" value="AAF21885.1"/>
    <property type="status" value="ALT_SEQ"/>
    <property type="molecule type" value="mRNA"/>
</dbReference>
<dbReference type="EMBL" id="AC006580">
    <property type="protein sequence ID" value="AAM15289.1"/>
    <property type="status" value="ALT_SEQ"/>
    <property type="molecule type" value="Genomic_DNA"/>
</dbReference>
<dbReference type="EMBL" id="AC006931">
    <property type="protein sequence ID" value="AAD21720.2"/>
    <property type="molecule type" value="Genomic_DNA"/>
</dbReference>
<dbReference type="EMBL" id="CP002685">
    <property type="protein sequence ID" value="AEC10182.1"/>
    <property type="molecule type" value="Genomic_DNA"/>
</dbReference>
<dbReference type="EMBL" id="AF367316">
    <property type="protein sequence ID" value="AAK32903.1"/>
    <property type="molecule type" value="mRNA"/>
</dbReference>
<dbReference type="EMBL" id="AY143940">
    <property type="protein sequence ID" value="AAN28879.1"/>
    <property type="molecule type" value="mRNA"/>
</dbReference>
<dbReference type="PIR" id="E84859">
    <property type="entry name" value="E84859"/>
</dbReference>
<dbReference type="RefSeq" id="NP_565990.1">
    <molecule id="Q9SJG8-1"/>
    <property type="nucleotide sequence ID" value="NM_129850.4"/>
</dbReference>
<dbReference type="SMR" id="Q9SJG8"/>
<dbReference type="FunCoup" id="Q9SJG8">
    <property type="interactions" value="8"/>
</dbReference>
<dbReference type="STRING" id="3702.Q9SJG8"/>
<dbReference type="GlyGen" id="Q9SJG8">
    <property type="glycosylation" value="2 sites, 1 O-linked glycan (2 sites)"/>
</dbReference>
<dbReference type="iPTMnet" id="Q9SJG8"/>
<dbReference type="PaxDb" id="3702-AT2G42890.1"/>
<dbReference type="ProteomicsDB" id="245049">
    <molecule id="Q9SJG8-1"/>
</dbReference>
<dbReference type="EnsemblPlants" id="AT2G42890.1">
    <molecule id="Q9SJG8-1"/>
    <property type="protein sequence ID" value="AT2G42890.1"/>
    <property type="gene ID" value="AT2G42890"/>
</dbReference>
<dbReference type="GeneID" id="818890"/>
<dbReference type="Gramene" id="AT2G42890.1">
    <molecule id="Q9SJG8-1"/>
    <property type="protein sequence ID" value="AT2G42890.1"/>
    <property type="gene ID" value="AT2G42890"/>
</dbReference>
<dbReference type="KEGG" id="ath:AT2G42890"/>
<dbReference type="Araport" id="AT2G42890"/>
<dbReference type="TAIR" id="AT2G42890">
    <property type="gene designation" value="ML2"/>
</dbReference>
<dbReference type="eggNOG" id="KOG4660">
    <property type="taxonomic scope" value="Eukaryota"/>
</dbReference>
<dbReference type="InParanoid" id="Q9SJG8"/>
<dbReference type="OrthoDB" id="417481at2759"/>
<dbReference type="PhylomeDB" id="Q9SJG8"/>
<dbReference type="PRO" id="PR:Q9SJG8"/>
<dbReference type="Proteomes" id="UP000006548">
    <property type="component" value="Chromosome 2"/>
</dbReference>
<dbReference type="ExpressionAtlas" id="Q9SJG8">
    <property type="expression patterns" value="baseline and differential"/>
</dbReference>
<dbReference type="GO" id="GO:0003723">
    <property type="term" value="F:RNA binding"/>
    <property type="evidence" value="ECO:0007669"/>
    <property type="project" value="UniProtKB-KW"/>
</dbReference>
<dbReference type="GO" id="GO:0051321">
    <property type="term" value="P:meiotic cell cycle"/>
    <property type="evidence" value="ECO:0007669"/>
    <property type="project" value="UniProtKB-KW"/>
</dbReference>
<dbReference type="GO" id="GO:0045927">
    <property type="term" value="P:positive regulation of growth"/>
    <property type="evidence" value="ECO:0000315"/>
    <property type="project" value="UniProtKB"/>
</dbReference>
<dbReference type="GO" id="GO:0045836">
    <property type="term" value="P:positive regulation of meiotic nuclear division"/>
    <property type="evidence" value="ECO:0000315"/>
    <property type="project" value="UniProtKB"/>
</dbReference>
<dbReference type="CDD" id="cd12524">
    <property type="entry name" value="RRM1_MEI2_like"/>
    <property type="match status" value="1"/>
</dbReference>
<dbReference type="CDD" id="cd12529">
    <property type="entry name" value="RRM2_MEI2_like"/>
    <property type="match status" value="1"/>
</dbReference>
<dbReference type="CDD" id="cd12531">
    <property type="entry name" value="RRM3_MEI2_like"/>
    <property type="match status" value="1"/>
</dbReference>
<dbReference type="FunFam" id="3.30.70.330:FF:000063">
    <property type="entry name" value="MEI2-like protein 5 isoform 2"/>
    <property type="match status" value="1"/>
</dbReference>
<dbReference type="FunFam" id="3.30.70.330:FF:000101">
    <property type="entry name" value="Protein MEI2-like 1"/>
    <property type="match status" value="1"/>
</dbReference>
<dbReference type="Gene3D" id="3.30.70.330">
    <property type="match status" value="2"/>
</dbReference>
<dbReference type="InterPro" id="IPR034453">
    <property type="entry name" value="MEI2-like_RRM1"/>
</dbReference>
<dbReference type="InterPro" id="IPR034454">
    <property type="entry name" value="MEI2-like_RRM3"/>
</dbReference>
<dbReference type="InterPro" id="IPR007201">
    <property type="entry name" value="Mei2-like_Rrm_C"/>
</dbReference>
<dbReference type="InterPro" id="IPR012677">
    <property type="entry name" value="Nucleotide-bd_a/b_plait_sf"/>
</dbReference>
<dbReference type="InterPro" id="IPR035979">
    <property type="entry name" value="RBD_domain_sf"/>
</dbReference>
<dbReference type="InterPro" id="IPR000504">
    <property type="entry name" value="RRM_dom"/>
</dbReference>
<dbReference type="PANTHER" id="PTHR23189">
    <property type="entry name" value="RNA RECOGNITION MOTIF-CONTAINING"/>
    <property type="match status" value="1"/>
</dbReference>
<dbReference type="Pfam" id="PF00076">
    <property type="entry name" value="RRM_1"/>
    <property type="match status" value="2"/>
</dbReference>
<dbReference type="Pfam" id="PF04059">
    <property type="entry name" value="RRM_2"/>
    <property type="match status" value="1"/>
</dbReference>
<dbReference type="SMART" id="SM00360">
    <property type="entry name" value="RRM"/>
    <property type="match status" value="2"/>
</dbReference>
<dbReference type="SUPFAM" id="SSF54928">
    <property type="entry name" value="RNA-binding domain, RBD"/>
    <property type="match status" value="2"/>
</dbReference>
<dbReference type="PROSITE" id="PS50102">
    <property type="entry name" value="RRM"/>
    <property type="match status" value="2"/>
</dbReference>
<comment type="function">
    <text evidence="3 4">Probable RNA-binding protein that plays a role in meiosis and vegetative growth.</text>
</comment>
<comment type="alternative products">
    <event type="alternative splicing"/>
    <isoform>
        <id>Q9SJG8-1</id>
        <name>1</name>
        <sequence type="displayed"/>
    </isoform>
    <text>A number of isoforms are produced. According to EST sequences.</text>
</comment>
<comment type="developmental stage">
    <text evidence="2">Expressed in the embryo at the heart and torpedo stages. Highly expressed throughout the vegetative shoot apex.</text>
</comment>
<comment type="disruption phenotype">
    <text evidence="3">Early flowering.</text>
</comment>
<comment type="sequence caution" evidence="5">
    <conflict type="miscellaneous discrepancy">
        <sequence resource="EMBL-CDS" id="AAF21885"/>
    </conflict>
    <text>Sequencing errors.</text>
</comment>
<comment type="sequence caution" evidence="5">
    <conflict type="erroneous gene model prediction">
        <sequence resource="EMBL-CDS" id="AAM15289"/>
    </conflict>
</comment>